<proteinExistence type="evidence at transcript level"/>
<comment type="function">
    <text evidence="1 2">Component of the cleavage factor Im (CFIm) complex that functions as an activator of the pre-mRNA 3'-end cleavage and polyadenylation processing required for the maturation of pre-mRNA into functional mRNAs. CFIm contributes to the recruitment of multiprotein complexes on specific sequences on the pre-mRNA 3'-end, so called cleavage and polyadenylation signals (pA signals). Most pre-mRNAs contain multiple pA signals, resulting in alternative cleavage and polyadenylation (APA) producing mRNAs with variable 3'-end formation. The CFIm complex acts as a key regulator of cleavage and polyadenylation site choice during APA through its binding to 5'-UGUA-3' elements localized in the 3'-untranslated region (UTR) for a huge number of pre-mRNAs. NUDT21/CPSF5 activates indirectly the mRNA 3'-processing machinery by recruiting CPSF6 and/or CPSF7. Binds to 5'-UGUA-3' elements localized upstream of pA signals that act as enhancers of pre-mRNA 3'-end processing. The homodimer mediates simultaneous sequence-specific recognition of two 5'-UGUA-3' elements within the pre-mRNA. Plays a role in somatic cell fate transitions and pluripotency by regulating widespread changes in gene expression through an APA-dependent function. Binds to chromatin. Binds to, but does not hydrolyze mono- and di-adenosine nucleotides.</text>
</comment>
<comment type="subunit">
    <text evidence="1">Homodimer (via N- and C-terminus); binds RNA as homodimer. Component of the cleavage factor Im (CFIm) complex which is a heterotetramer composed of two subunits of NUDT21/CPSF5 and two subunits of CPSF6 or CPSF7 or a heterodimer of CPSF6 and CPSF7. The cleavage factor Im (CFIm) complex associates with the CPSF and CSTF complexes to promote the assembly of the core mRNA 3'-processing machinery. Interacts with CPSF6 (via the RRM domain); this interaction is direct and enhances binding to RNA. Interacts with CPSF7. Interacts with FIP1L1; this interaction occurs in a RNA sequence-specific manner. Interacts with PABPN1. Interacts (via N-terminus) with PAPOLA (via C-terminus); this interaction is direct and diminished by acetylation. Interacts with SNRNP70. Interacts with VIRMA.</text>
</comment>
<comment type="subcellular location">
    <subcellularLocation>
        <location evidence="1">Nucleus</location>
    </subcellularLocation>
    <subcellularLocation>
        <location evidence="1">Cytoplasm</location>
    </subcellularLocation>
    <text evidence="1">Shuttles between the nucleus and the cytoplasm in a transcription- and XPO1/CRM1-independent manner, most probably in complex with the cleavage factor Im complex (CFIm). In punctate subnuclear structures localized adjacent to nuclear speckles, called paraspeckles.</text>
</comment>
<comment type="PTM">
    <text evidence="1">Acetylated mainly by p300/CBP, recruited to the complex by CPSF6. Acetylation decreases interaction with PAPAO. Deacetylated by the class I/II HDACs, HDAC1, HDAC3 and HDAC10, and by the class III HDACs, SIRT1 and SIRT2.</text>
</comment>
<comment type="similarity">
    <text evidence="4">Belongs to the Nudix hydrolase family. CPSF5 subfamily.</text>
</comment>
<comment type="caution">
    <text evidence="4">Lacks the conserved metal-binding residues in the NUDIX motif and is not expected to have hydrolase activity.</text>
</comment>
<gene>
    <name evidence="1" type="primary">NUDT21</name>
    <name evidence="1" type="synonym">CPSF5</name>
</gene>
<keyword id="KW-0007">Acetylation</keyword>
<keyword id="KW-0963">Cytoplasm</keyword>
<keyword id="KW-0221">Differentiation</keyword>
<keyword id="KW-0488">Methylation</keyword>
<keyword id="KW-0507">mRNA processing</keyword>
<keyword id="KW-0539">Nucleus</keyword>
<keyword id="KW-0597">Phosphoprotein</keyword>
<keyword id="KW-1185">Reference proteome</keyword>
<keyword id="KW-0694">RNA-binding</keyword>
<protein>
    <recommendedName>
        <fullName evidence="1">Cleavage and polyadenylation specificity factor subunit 5</fullName>
    </recommendedName>
    <alternativeName>
        <fullName>Nucleoside diphosphate-linked moiety X motif 21</fullName>
        <shortName>Nudix motif 21</shortName>
    </alternativeName>
    <alternativeName>
        <fullName evidence="1">Nudix hydrolase 21</fullName>
    </alternativeName>
</protein>
<dbReference type="EMBL" id="CR859027">
    <property type="protein sequence ID" value="CAH91222.1"/>
    <property type="molecule type" value="mRNA"/>
</dbReference>
<dbReference type="RefSeq" id="NP_001125721.1">
    <property type="nucleotide sequence ID" value="NM_001132249.2"/>
</dbReference>
<dbReference type="SMR" id="Q5RAI8"/>
<dbReference type="FunCoup" id="Q5RAI8">
    <property type="interactions" value="4039"/>
</dbReference>
<dbReference type="STRING" id="9601.ENSPPYP00000008319"/>
<dbReference type="Ensembl" id="ENSPPYT00000008659.3">
    <property type="protein sequence ID" value="ENSPPYP00000008319.2"/>
    <property type="gene ID" value="ENSPPYG00000007365.3"/>
</dbReference>
<dbReference type="GeneID" id="100172645"/>
<dbReference type="KEGG" id="pon:100172645"/>
<dbReference type="CTD" id="11051"/>
<dbReference type="eggNOG" id="KOG1689">
    <property type="taxonomic scope" value="Eukaryota"/>
</dbReference>
<dbReference type="GeneTree" id="ENSGT00390000015814"/>
<dbReference type="HOGENOM" id="CLU_068704_2_1_1"/>
<dbReference type="InParanoid" id="Q5RAI8"/>
<dbReference type="OMA" id="NDEWEIG"/>
<dbReference type="OrthoDB" id="277288at2759"/>
<dbReference type="TreeFam" id="TF106356"/>
<dbReference type="Proteomes" id="UP000001595">
    <property type="component" value="Chromosome 16"/>
</dbReference>
<dbReference type="GO" id="GO:0034451">
    <property type="term" value="C:centriolar satellite"/>
    <property type="evidence" value="ECO:0007669"/>
    <property type="project" value="Ensembl"/>
</dbReference>
<dbReference type="GO" id="GO:0005737">
    <property type="term" value="C:cytoplasm"/>
    <property type="evidence" value="ECO:0000250"/>
    <property type="project" value="UniProtKB"/>
</dbReference>
<dbReference type="GO" id="GO:0005847">
    <property type="term" value="C:mRNA cleavage and polyadenylation specificity factor complex"/>
    <property type="evidence" value="ECO:0007669"/>
    <property type="project" value="Ensembl"/>
</dbReference>
<dbReference type="GO" id="GO:0005849">
    <property type="term" value="C:mRNA cleavage factor complex"/>
    <property type="evidence" value="ECO:0000250"/>
    <property type="project" value="UniProtKB"/>
</dbReference>
<dbReference type="GO" id="GO:0005634">
    <property type="term" value="C:nucleus"/>
    <property type="evidence" value="ECO:0000250"/>
    <property type="project" value="UniProtKB"/>
</dbReference>
<dbReference type="GO" id="GO:0042382">
    <property type="term" value="C:paraspeckles"/>
    <property type="evidence" value="ECO:0000250"/>
    <property type="project" value="UniProtKB"/>
</dbReference>
<dbReference type="GO" id="GO:0003682">
    <property type="term" value="F:chromatin binding"/>
    <property type="evidence" value="ECO:0000250"/>
    <property type="project" value="UniProtKB"/>
</dbReference>
<dbReference type="GO" id="GO:0042826">
    <property type="term" value="F:histone deacetylase binding"/>
    <property type="evidence" value="ECO:0007669"/>
    <property type="project" value="Ensembl"/>
</dbReference>
<dbReference type="GO" id="GO:0042802">
    <property type="term" value="F:identical protein binding"/>
    <property type="evidence" value="ECO:0000250"/>
    <property type="project" value="UniProtKB"/>
</dbReference>
<dbReference type="GO" id="GO:0035925">
    <property type="term" value="F:mRNA 3'-UTR AU-rich region binding"/>
    <property type="evidence" value="ECO:0000250"/>
    <property type="project" value="UniProtKB"/>
</dbReference>
<dbReference type="GO" id="GO:0003729">
    <property type="term" value="F:mRNA binding"/>
    <property type="evidence" value="ECO:0000250"/>
    <property type="project" value="UniProtKB"/>
</dbReference>
<dbReference type="GO" id="GO:0042803">
    <property type="term" value="F:protein homodimerization activity"/>
    <property type="evidence" value="ECO:0007669"/>
    <property type="project" value="Ensembl"/>
</dbReference>
<dbReference type="GO" id="GO:0030154">
    <property type="term" value="P:cell differentiation"/>
    <property type="evidence" value="ECO:0007669"/>
    <property type="project" value="UniProtKB-KW"/>
</dbReference>
<dbReference type="GO" id="GO:0180010">
    <property type="term" value="P:co-transcriptional mRNA 3'-end processing, cleavage and polyadenylation pathway"/>
    <property type="evidence" value="ECO:0000250"/>
    <property type="project" value="UniProtKB"/>
</dbReference>
<dbReference type="GO" id="GO:0031124">
    <property type="term" value="P:mRNA 3'-end processing"/>
    <property type="evidence" value="ECO:0000250"/>
    <property type="project" value="UniProtKB"/>
</dbReference>
<dbReference type="GO" id="GO:0110104">
    <property type="term" value="P:mRNA alternative polyadenylation"/>
    <property type="evidence" value="ECO:0000250"/>
    <property type="project" value="UniProtKB"/>
</dbReference>
<dbReference type="GO" id="GO:0006397">
    <property type="term" value="P:mRNA processing"/>
    <property type="evidence" value="ECO:0000250"/>
    <property type="project" value="UniProtKB"/>
</dbReference>
<dbReference type="GO" id="GO:2000975">
    <property type="term" value="P:positive regulation of pro-B cell differentiation"/>
    <property type="evidence" value="ECO:0000250"/>
    <property type="project" value="UniProtKB"/>
</dbReference>
<dbReference type="GO" id="GO:2000738">
    <property type="term" value="P:positive regulation of stem cell differentiation"/>
    <property type="evidence" value="ECO:0000250"/>
    <property type="project" value="UniProtKB"/>
</dbReference>
<dbReference type="GO" id="GO:0010608">
    <property type="term" value="P:post-transcriptional regulation of gene expression"/>
    <property type="evidence" value="ECO:0000250"/>
    <property type="project" value="UniProtKB"/>
</dbReference>
<dbReference type="GO" id="GO:0051290">
    <property type="term" value="P:protein heterotetramerization"/>
    <property type="evidence" value="ECO:0000250"/>
    <property type="project" value="UniProtKB"/>
</dbReference>
<dbReference type="CDD" id="cd18871">
    <property type="entry name" value="NUDIX_Cfim25_Nudt21"/>
    <property type="match status" value="1"/>
</dbReference>
<dbReference type="FunFam" id="3.90.79.10:FF:000008">
    <property type="entry name" value="cleavage and polyadenylation specificity factor subunit 5"/>
    <property type="match status" value="1"/>
</dbReference>
<dbReference type="Gene3D" id="3.90.79.10">
    <property type="entry name" value="Nucleoside Triphosphate Pyrophosphohydrolase"/>
    <property type="match status" value="1"/>
</dbReference>
<dbReference type="InterPro" id="IPR016706">
    <property type="entry name" value="Cleav_polyA_spec_factor_su5"/>
</dbReference>
<dbReference type="InterPro" id="IPR015797">
    <property type="entry name" value="NUDIX_hydrolase-like_dom_sf"/>
</dbReference>
<dbReference type="InterPro" id="IPR000086">
    <property type="entry name" value="NUDIX_hydrolase_dom"/>
</dbReference>
<dbReference type="PANTHER" id="PTHR13047">
    <property type="entry name" value="PRE-MRNA CLEAVAGE FACTOR IM, 25KD SUBUNIT"/>
    <property type="match status" value="1"/>
</dbReference>
<dbReference type="Pfam" id="PF13869">
    <property type="entry name" value="NUDIX_2"/>
    <property type="match status" value="1"/>
</dbReference>
<dbReference type="PIRSF" id="PIRSF017888">
    <property type="entry name" value="CPSF-25"/>
    <property type="match status" value="1"/>
</dbReference>
<dbReference type="SUPFAM" id="SSF55811">
    <property type="entry name" value="Nudix"/>
    <property type="match status" value="1"/>
</dbReference>
<dbReference type="PROSITE" id="PS51462">
    <property type="entry name" value="NUDIX"/>
    <property type="match status" value="1"/>
</dbReference>
<reference key="1">
    <citation type="submission" date="2004-11" db="EMBL/GenBank/DDBJ databases">
        <authorList>
            <consortium name="The German cDNA consortium"/>
        </authorList>
    </citation>
    <scope>NUCLEOTIDE SEQUENCE [LARGE SCALE MRNA]</scope>
    <source>
        <tissue>Kidney</tissue>
    </source>
</reference>
<evidence type="ECO:0000250" key="1">
    <source>
        <dbReference type="UniProtKB" id="O43809"/>
    </source>
</evidence>
<evidence type="ECO:0000250" key="2">
    <source>
        <dbReference type="UniProtKB" id="Q9CQF3"/>
    </source>
</evidence>
<evidence type="ECO:0000255" key="3">
    <source>
        <dbReference type="PROSITE-ProRule" id="PRU00794"/>
    </source>
</evidence>
<evidence type="ECO:0000305" key="4"/>
<accession>Q5RAI8</accession>
<feature type="initiator methionine" description="Removed" evidence="1">
    <location>
        <position position="1"/>
    </location>
</feature>
<feature type="chain" id="PRO_0000057152" description="Cleavage and polyadenylation specificity factor subunit 5">
    <location>
        <begin position="2"/>
        <end position="227"/>
    </location>
</feature>
<feature type="domain" description="Nudix hydrolase" evidence="3">
    <location>
        <begin position="76"/>
        <end position="201"/>
    </location>
</feature>
<feature type="region of interest" description="Necessary for RNA-binding" evidence="1">
    <location>
        <begin position="2"/>
        <end position="147"/>
    </location>
</feature>
<feature type="region of interest" description="Necessary for interactions with PAPOLA and PABPN1" evidence="1">
    <location>
        <begin position="81"/>
        <end position="160"/>
    </location>
</feature>
<feature type="region of interest" description="Interaction with RNA" evidence="1">
    <location>
        <begin position="102"/>
        <end position="104"/>
    </location>
</feature>
<feature type="short sequence motif" description="Nudix box">
    <location>
        <begin position="109"/>
        <end position="130"/>
    </location>
</feature>
<feature type="site" description="Interaction with RNA" evidence="1">
    <location>
        <position position="55"/>
    </location>
</feature>
<feature type="site" description="Interaction with RNA" evidence="1">
    <location>
        <position position="63"/>
    </location>
</feature>
<feature type="modified residue" description="N-acetylserine" evidence="1">
    <location>
        <position position="2"/>
    </location>
</feature>
<feature type="modified residue" description="Omega-N-methylarginine" evidence="1">
    <location>
        <position position="15"/>
    </location>
</feature>
<feature type="modified residue" description="N6-acetyllysine" evidence="1">
    <location>
        <position position="23"/>
    </location>
</feature>
<feature type="modified residue" description="N6-acetyllysine" evidence="1">
    <location>
        <position position="29"/>
    </location>
</feature>
<feature type="modified residue" description="Phosphotyrosine" evidence="1">
    <location>
        <position position="40"/>
    </location>
</feature>
<feature type="modified residue" description="N6-acetyllysine" evidence="1">
    <location>
        <position position="56"/>
    </location>
</feature>
<name>CPSF5_PONAB</name>
<sequence length="227" mass="26227">MSVVPPNRSQTGWPRGVTQFGNKYIQQTKPLTLERTINLYPLTNYTFGTKEPLYEKDSSVAARFQRMREEFDKIGMRRTVEGVLIVHEHRLPHVLLLQLGTTFFKLPGGELNPGEDEVEGLKRLMTEILGRQDGVLQDWVIDDCIGNWWRPNFEPPQYPYIPAHITKPKEHKKLFLVQLQEKALFAVPKNYKLVAAPLFELYDNAPGYGPIISSLPQLLSRFNFIYN</sequence>
<organism>
    <name type="scientific">Pongo abelii</name>
    <name type="common">Sumatran orangutan</name>
    <name type="synonym">Pongo pygmaeus abelii</name>
    <dbReference type="NCBI Taxonomy" id="9601"/>
    <lineage>
        <taxon>Eukaryota</taxon>
        <taxon>Metazoa</taxon>
        <taxon>Chordata</taxon>
        <taxon>Craniata</taxon>
        <taxon>Vertebrata</taxon>
        <taxon>Euteleostomi</taxon>
        <taxon>Mammalia</taxon>
        <taxon>Eutheria</taxon>
        <taxon>Euarchontoglires</taxon>
        <taxon>Primates</taxon>
        <taxon>Haplorrhini</taxon>
        <taxon>Catarrhini</taxon>
        <taxon>Hominidae</taxon>
        <taxon>Pongo</taxon>
    </lineage>
</organism>